<name>GRPE_LEGPH</name>
<reference key="1">
    <citation type="journal article" date="2004" name="Science">
        <title>The genomic sequence of the accidental pathogen Legionella pneumophila.</title>
        <authorList>
            <person name="Chien M."/>
            <person name="Morozova I."/>
            <person name="Shi S."/>
            <person name="Sheng H."/>
            <person name="Chen J."/>
            <person name="Gomez S.M."/>
            <person name="Asamani G."/>
            <person name="Hill K."/>
            <person name="Nuara J."/>
            <person name="Feder M."/>
            <person name="Rineer J."/>
            <person name="Greenberg J.J."/>
            <person name="Steshenko V."/>
            <person name="Park S.H."/>
            <person name="Zhao B."/>
            <person name="Teplitskaya E."/>
            <person name="Edwards J.R."/>
            <person name="Pampou S."/>
            <person name="Georghiou A."/>
            <person name="Chou I.-C."/>
            <person name="Iannuccilli W."/>
            <person name="Ulz M.E."/>
            <person name="Kim D.H."/>
            <person name="Geringer-Sameth A."/>
            <person name="Goldsberry C."/>
            <person name="Morozov P."/>
            <person name="Fischer S.G."/>
            <person name="Segal G."/>
            <person name="Qu X."/>
            <person name="Rzhetsky A."/>
            <person name="Zhang P."/>
            <person name="Cayanis E."/>
            <person name="De Jong P.J."/>
            <person name="Ju J."/>
            <person name="Kalachikov S."/>
            <person name="Shuman H.A."/>
            <person name="Russo J.J."/>
        </authorList>
    </citation>
    <scope>NUCLEOTIDE SEQUENCE [LARGE SCALE GENOMIC DNA]</scope>
    <source>
        <strain>Philadelphia 1 / ATCC 33152 / DSM 7513</strain>
    </source>
</reference>
<sequence>MMSKQNKKDWKKFKDEHKEEHKVENEILEEETDEESQHQEPALGHPSYTALEEQLTLAEQKAHENWEKSVRALAELENVRRRMEREVANAHKYGVEKLISALLPVVDSLEQALQLADKNSDPSMHEGLELTMKLFLDALQKFDVEQIDPLGQTFDPQQHEAMSMQPAPGAPPNSVITVFQKGYKLSDRVIRPARVIVSTK</sequence>
<keyword id="KW-0143">Chaperone</keyword>
<keyword id="KW-0963">Cytoplasm</keyword>
<keyword id="KW-1185">Reference proteome</keyword>
<keyword id="KW-0346">Stress response</keyword>
<accession>Q5ZTY2</accession>
<protein>
    <recommendedName>
        <fullName evidence="1">Protein GrpE</fullName>
    </recommendedName>
    <alternativeName>
        <fullName evidence="1">HSP-70 cofactor</fullName>
    </alternativeName>
</protein>
<organism>
    <name type="scientific">Legionella pneumophila subsp. pneumophila (strain Philadelphia 1 / ATCC 33152 / DSM 7513)</name>
    <dbReference type="NCBI Taxonomy" id="272624"/>
    <lineage>
        <taxon>Bacteria</taxon>
        <taxon>Pseudomonadati</taxon>
        <taxon>Pseudomonadota</taxon>
        <taxon>Gammaproteobacteria</taxon>
        <taxon>Legionellales</taxon>
        <taxon>Legionellaceae</taxon>
        <taxon>Legionella</taxon>
    </lineage>
</organism>
<feature type="chain" id="PRO_1000053597" description="Protein GrpE">
    <location>
        <begin position="1"/>
        <end position="200"/>
    </location>
</feature>
<feature type="region of interest" description="Disordered" evidence="2">
    <location>
        <begin position="1"/>
        <end position="52"/>
    </location>
</feature>
<feature type="compositionally biased region" description="Basic and acidic residues" evidence="2">
    <location>
        <begin position="1"/>
        <end position="25"/>
    </location>
</feature>
<dbReference type="EMBL" id="AE017354">
    <property type="protein sequence ID" value="AAU28095.1"/>
    <property type="molecule type" value="Genomic_DNA"/>
</dbReference>
<dbReference type="RefSeq" id="YP_096042.1">
    <property type="nucleotide sequence ID" value="NC_002942.5"/>
</dbReference>
<dbReference type="SMR" id="Q5ZTY2"/>
<dbReference type="STRING" id="272624.lpg2026"/>
<dbReference type="PaxDb" id="272624-lpg2026"/>
<dbReference type="KEGG" id="lpn:lpg2026"/>
<dbReference type="PATRIC" id="fig|272624.6.peg.2122"/>
<dbReference type="eggNOG" id="COG0576">
    <property type="taxonomic scope" value="Bacteria"/>
</dbReference>
<dbReference type="HOGENOM" id="CLU_057217_6_0_6"/>
<dbReference type="OrthoDB" id="9789811at2"/>
<dbReference type="Proteomes" id="UP000000609">
    <property type="component" value="Chromosome"/>
</dbReference>
<dbReference type="GO" id="GO:0005829">
    <property type="term" value="C:cytosol"/>
    <property type="evidence" value="ECO:0007669"/>
    <property type="project" value="TreeGrafter"/>
</dbReference>
<dbReference type="GO" id="GO:0000774">
    <property type="term" value="F:adenyl-nucleotide exchange factor activity"/>
    <property type="evidence" value="ECO:0007669"/>
    <property type="project" value="InterPro"/>
</dbReference>
<dbReference type="GO" id="GO:0042803">
    <property type="term" value="F:protein homodimerization activity"/>
    <property type="evidence" value="ECO:0007669"/>
    <property type="project" value="InterPro"/>
</dbReference>
<dbReference type="GO" id="GO:0051087">
    <property type="term" value="F:protein-folding chaperone binding"/>
    <property type="evidence" value="ECO:0007669"/>
    <property type="project" value="InterPro"/>
</dbReference>
<dbReference type="GO" id="GO:0051082">
    <property type="term" value="F:unfolded protein binding"/>
    <property type="evidence" value="ECO:0007669"/>
    <property type="project" value="TreeGrafter"/>
</dbReference>
<dbReference type="GO" id="GO:0006457">
    <property type="term" value="P:protein folding"/>
    <property type="evidence" value="ECO:0007669"/>
    <property type="project" value="InterPro"/>
</dbReference>
<dbReference type="CDD" id="cd00446">
    <property type="entry name" value="GrpE"/>
    <property type="match status" value="1"/>
</dbReference>
<dbReference type="FunFam" id="2.30.22.10:FF:000001">
    <property type="entry name" value="Protein GrpE"/>
    <property type="match status" value="1"/>
</dbReference>
<dbReference type="Gene3D" id="3.90.20.20">
    <property type="match status" value="1"/>
</dbReference>
<dbReference type="Gene3D" id="2.30.22.10">
    <property type="entry name" value="Head domain of nucleotide exchange factor GrpE"/>
    <property type="match status" value="1"/>
</dbReference>
<dbReference type="HAMAP" id="MF_01151">
    <property type="entry name" value="GrpE"/>
    <property type="match status" value="1"/>
</dbReference>
<dbReference type="InterPro" id="IPR000740">
    <property type="entry name" value="GrpE"/>
</dbReference>
<dbReference type="InterPro" id="IPR013805">
    <property type="entry name" value="GrpE_coiled_coil"/>
</dbReference>
<dbReference type="InterPro" id="IPR009012">
    <property type="entry name" value="GrpE_head"/>
</dbReference>
<dbReference type="NCBIfam" id="NF010737">
    <property type="entry name" value="PRK14139.1"/>
    <property type="match status" value="1"/>
</dbReference>
<dbReference type="NCBIfam" id="NF010738">
    <property type="entry name" value="PRK14140.1"/>
    <property type="match status" value="1"/>
</dbReference>
<dbReference type="NCBIfam" id="NF010742">
    <property type="entry name" value="PRK14144.1"/>
    <property type="match status" value="1"/>
</dbReference>
<dbReference type="NCBIfam" id="NF010748">
    <property type="entry name" value="PRK14150.1"/>
    <property type="match status" value="1"/>
</dbReference>
<dbReference type="PANTHER" id="PTHR21237">
    <property type="entry name" value="GRPE PROTEIN"/>
    <property type="match status" value="1"/>
</dbReference>
<dbReference type="PANTHER" id="PTHR21237:SF23">
    <property type="entry name" value="GRPE PROTEIN HOMOLOG, MITOCHONDRIAL"/>
    <property type="match status" value="1"/>
</dbReference>
<dbReference type="Pfam" id="PF01025">
    <property type="entry name" value="GrpE"/>
    <property type="match status" value="1"/>
</dbReference>
<dbReference type="PRINTS" id="PR00773">
    <property type="entry name" value="GRPEPROTEIN"/>
</dbReference>
<dbReference type="SUPFAM" id="SSF58014">
    <property type="entry name" value="Coiled-coil domain of nucleotide exchange factor GrpE"/>
    <property type="match status" value="1"/>
</dbReference>
<dbReference type="SUPFAM" id="SSF51064">
    <property type="entry name" value="Head domain of nucleotide exchange factor GrpE"/>
    <property type="match status" value="1"/>
</dbReference>
<dbReference type="PROSITE" id="PS01071">
    <property type="entry name" value="GRPE"/>
    <property type="match status" value="1"/>
</dbReference>
<proteinExistence type="inferred from homology"/>
<gene>
    <name evidence="1" type="primary">grpE</name>
    <name type="ordered locus">lpg2026</name>
</gene>
<evidence type="ECO:0000255" key="1">
    <source>
        <dbReference type="HAMAP-Rule" id="MF_01151"/>
    </source>
</evidence>
<evidence type="ECO:0000256" key="2">
    <source>
        <dbReference type="SAM" id="MobiDB-lite"/>
    </source>
</evidence>
<comment type="function">
    <text evidence="1">Participates actively in the response to hyperosmotic and heat shock by preventing the aggregation of stress-denatured proteins, in association with DnaK and GrpE. It is the nucleotide exchange factor for DnaK and may function as a thermosensor. Unfolded proteins bind initially to DnaJ; upon interaction with the DnaJ-bound protein, DnaK hydrolyzes its bound ATP, resulting in the formation of a stable complex. GrpE releases ADP from DnaK; ATP binding to DnaK triggers the release of the substrate protein, thus completing the reaction cycle. Several rounds of ATP-dependent interactions between DnaJ, DnaK and GrpE are required for fully efficient folding.</text>
</comment>
<comment type="subunit">
    <text evidence="1">Homodimer.</text>
</comment>
<comment type="subcellular location">
    <subcellularLocation>
        <location evidence="1">Cytoplasm</location>
    </subcellularLocation>
</comment>
<comment type="similarity">
    <text evidence="1">Belongs to the GrpE family.</text>
</comment>